<name>MRAY_LEPBJ</name>
<gene>
    <name evidence="1" type="primary">mraY</name>
    <name type="ordered locus">LBJ_0478</name>
</gene>
<keyword id="KW-0131">Cell cycle</keyword>
<keyword id="KW-0132">Cell division</keyword>
<keyword id="KW-0997">Cell inner membrane</keyword>
<keyword id="KW-1003">Cell membrane</keyword>
<keyword id="KW-0133">Cell shape</keyword>
<keyword id="KW-0961">Cell wall biogenesis/degradation</keyword>
<keyword id="KW-0460">Magnesium</keyword>
<keyword id="KW-0472">Membrane</keyword>
<keyword id="KW-0479">Metal-binding</keyword>
<keyword id="KW-0573">Peptidoglycan synthesis</keyword>
<keyword id="KW-0808">Transferase</keyword>
<keyword id="KW-0812">Transmembrane</keyword>
<keyword id="KW-1133">Transmembrane helix</keyword>
<proteinExistence type="inferred from homology"/>
<reference key="1">
    <citation type="journal article" date="2006" name="Proc. Natl. Acad. Sci. U.S.A.">
        <title>Genome reduction in Leptospira borgpetersenii reflects limited transmission potential.</title>
        <authorList>
            <person name="Bulach D.M."/>
            <person name="Zuerner R.L."/>
            <person name="Wilson P."/>
            <person name="Seemann T."/>
            <person name="McGrath A."/>
            <person name="Cullen P.A."/>
            <person name="Davis J."/>
            <person name="Johnson M."/>
            <person name="Kuczek E."/>
            <person name="Alt D.P."/>
            <person name="Peterson-Burch B."/>
            <person name="Coppel R.L."/>
            <person name="Rood J.I."/>
            <person name="Davies J.K."/>
            <person name="Adler B."/>
        </authorList>
    </citation>
    <scope>NUCLEOTIDE SEQUENCE [LARGE SCALE GENOMIC DNA]</scope>
    <source>
        <strain>JB197</strain>
    </source>
</reference>
<feature type="chain" id="PRO_1000003001" description="Phospho-N-acetylmuramoyl-pentapeptide-transferase">
    <location>
        <begin position="1"/>
        <end position="370"/>
    </location>
</feature>
<feature type="transmembrane region" description="Helical" evidence="1">
    <location>
        <begin position="31"/>
        <end position="51"/>
    </location>
</feature>
<feature type="transmembrane region" description="Helical" evidence="1">
    <location>
        <begin position="73"/>
        <end position="93"/>
    </location>
</feature>
<feature type="transmembrane region" description="Helical" evidence="1">
    <location>
        <begin position="98"/>
        <end position="118"/>
    </location>
</feature>
<feature type="transmembrane region" description="Helical" evidence="1">
    <location>
        <begin position="135"/>
        <end position="155"/>
    </location>
</feature>
<feature type="transmembrane region" description="Helical" evidence="1">
    <location>
        <begin position="177"/>
        <end position="197"/>
    </location>
</feature>
<feature type="transmembrane region" description="Helical" evidence="1">
    <location>
        <begin position="209"/>
        <end position="229"/>
    </location>
</feature>
<feature type="transmembrane region" description="Helical" evidence="1">
    <location>
        <begin position="251"/>
        <end position="271"/>
    </location>
</feature>
<feature type="transmembrane region" description="Helical" evidence="1">
    <location>
        <begin position="273"/>
        <end position="293"/>
    </location>
</feature>
<feature type="transmembrane region" description="Helical" evidence="1">
    <location>
        <begin position="298"/>
        <end position="318"/>
    </location>
</feature>
<feature type="transmembrane region" description="Helical" evidence="1">
    <location>
        <begin position="347"/>
        <end position="367"/>
    </location>
</feature>
<accession>Q04V92</accession>
<dbReference type="EC" id="2.7.8.13" evidence="1"/>
<dbReference type="EMBL" id="CP000350">
    <property type="protein sequence ID" value="ABJ75178.1"/>
    <property type="molecule type" value="Genomic_DNA"/>
</dbReference>
<dbReference type="RefSeq" id="WP_011670912.1">
    <property type="nucleotide sequence ID" value="NC_008510.1"/>
</dbReference>
<dbReference type="SMR" id="Q04V92"/>
<dbReference type="KEGG" id="lbj:LBJ_0478"/>
<dbReference type="HOGENOM" id="CLU_023982_0_0_12"/>
<dbReference type="UniPathway" id="UPA00219"/>
<dbReference type="Proteomes" id="UP000000656">
    <property type="component" value="Chromosome 1"/>
</dbReference>
<dbReference type="GO" id="GO:0005886">
    <property type="term" value="C:plasma membrane"/>
    <property type="evidence" value="ECO:0007669"/>
    <property type="project" value="UniProtKB-SubCell"/>
</dbReference>
<dbReference type="GO" id="GO:0046872">
    <property type="term" value="F:metal ion binding"/>
    <property type="evidence" value="ECO:0007669"/>
    <property type="project" value="UniProtKB-KW"/>
</dbReference>
<dbReference type="GO" id="GO:0008963">
    <property type="term" value="F:phospho-N-acetylmuramoyl-pentapeptide-transferase activity"/>
    <property type="evidence" value="ECO:0007669"/>
    <property type="project" value="UniProtKB-UniRule"/>
</dbReference>
<dbReference type="GO" id="GO:0051992">
    <property type="term" value="F:UDP-N-acetylmuramoyl-L-alanyl-D-glutamyl-meso-2,6-diaminopimelyl-D-alanyl-D-alanine:undecaprenyl-phosphate transferase activity"/>
    <property type="evidence" value="ECO:0007669"/>
    <property type="project" value="RHEA"/>
</dbReference>
<dbReference type="GO" id="GO:0051301">
    <property type="term" value="P:cell division"/>
    <property type="evidence" value="ECO:0007669"/>
    <property type="project" value="UniProtKB-KW"/>
</dbReference>
<dbReference type="GO" id="GO:0071555">
    <property type="term" value="P:cell wall organization"/>
    <property type="evidence" value="ECO:0007669"/>
    <property type="project" value="UniProtKB-KW"/>
</dbReference>
<dbReference type="GO" id="GO:0009252">
    <property type="term" value="P:peptidoglycan biosynthetic process"/>
    <property type="evidence" value="ECO:0007669"/>
    <property type="project" value="UniProtKB-UniRule"/>
</dbReference>
<dbReference type="GO" id="GO:0008360">
    <property type="term" value="P:regulation of cell shape"/>
    <property type="evidence" value="ECO:0007669"/>
    <property type="project" value="UniProtKB-KW"/>
</dbReference>
<dbReference type="CDD" id="cd06852">
    <property type="entry name" value="GT_MraY"/>
    <property type="match status" value="1"/>
</dbReference>
<dbReference type="HAMAP" id="MF_00038">
    <property type="entry name" value="MraY"/>
    <property type="match status" value="1"/>
</dbReference>
<dbReference type="InterPro" id="IPR000715">
    <property type="entry name" value="Glycosyl_transferase_4"/>
</dbReference>
<dbReference type="InterPro" id="IPR003524">
    <property type="entry name" value="PNAcMuramoyl-5peptid_Trfase"/>
</dbReference>
<dbReference type="InterPro" id="IPR018480">
    <property type="entry name" value="PNAcMuramoyl-5peptid_Trfase_CS"/>
</dbReference>
<dbReference type="NCBIfam" id="TIGR00445">
    <property type="entry name" value="mraY"/>
    <property type="match status" value="1"/>
</dbReference>
<dbReference type="PANTHER" id="PTHR22926">
    <property type="entry name" value="PHOSPHO-N-ACETYLMURAMOYL-PENTAPEPTIDE-TRANSFERASE"/>
    <property type="match status" value="1"/>
</dbReference>
<dbReference type="PANTHER" id="PTHR22926:SF5">
    <property type="entry name" value="PHOSPHO-N-ACETYLMURAMOYL-PENTAPEPTIDE-TRANSFERASE HOMOLOG"/>
    <property type="match status" value="1"/>
</dbReference>
<dbReference type="Pfam" id="PF00953">
    <property type="entry name" value="Glycos_transf_4"/>
    <property type="match status" value="1"/>
</dbReference>
<dbReference type="Pfam" id="PF10555">
    <property type="entry name" value="MraY_sig1"/>
    <property type="match status" value="1"/>
</dbReference>
<dbReference type="PROSITE" id="PS01347">
    <property type="entry name" value="MRAY_1"/>
    <property type="match status" value="1"/>
</dbReference>
<dbReference type="PROSITE" id="PS01348">
    <property type="entry name" value="MRAY_2"/>
    <property type="match status" value="1"/>
</dbReference>
<organism>
    <name type="scientific">Leptospira borgpetersenii serovar Hardjo-bovis (strain JB197)</name>
    <dbReference type="NCBI Taxonomy" id="355277"/>
    <lineage>
        <taxon>Bacteria</taxon>
        <taxon>Pseudomonadati</taxon>
        <taxon>Spirochaetota</taxon>
        <taxon>Spirochaetia</taxon>
        <taxon>Leptospirales</taxon>
        <taxon>Leptospiraceae</taxon>
        <taxon>Leptospira</taxon>
    </lineage>
</organism>
<sequence length="370" mass="40560">MFYYLYDLYFNHLDSLRIFSYVTFRALMAGLTSMFVTFWLGHKVIDFLYGLKFRESVRDDGPKSHESKKGTPTMGGLLIIGSLLLSVLLWGNLKNSNIIVLSVFALCFSALGFADDYMKSVKKIKGGMKARTKFLLSILISLVFCILFFYYTGVIPTGHSGKIPFQITDLFFPFVKGPVLALGVFAIPFSILVIIGSSHAVNLTDGLDGLATGTVAISVVTLGIIAYVSGTPITANYLNIPYLPGAHEYSVFLSALAGALFGFLWFNAHPAQVFMGDTGSLFLGATLGMIVILLKKEILLLILGAIFVSEALSVILQVGSFKLTGKRIFKMAPLHHHFELGGVKETKIVIRFWIIAVILAIISLSTLKIQ</sequence>
<protein>
    <recommendedName>
        <fullName evidence="1">Phospho-N-acetylmuramoyl-pentapeptide-transferase</fullName>
        <ecNumber evidence="1">2.7.8.13</ecNumber>
    </recommendedName>
    <alternativeName>
        <fullName evidence="1">UDP-MurNAc-pentapeptide phosphotransferase</fullName>
    </alternativeName>
</protein>
<evidence type="ECO:0000255" key="1">
    <source>
        <dbReference type="HAMAP-Rule" id="MF_00038"/>
    </source>
</evidence>
<comment type="function">
    <text evidence="1">Catalyzes the initial step of the lipid cycle reactions in the biosynthesis of the cell wall peptidoglycan: transfers peptidoglycan precursor phospho-MurNAc-pentapeptide from UDP-MurNAc-pentapeptide onto the lipid carrier undecaprenyl phosphate, yielding undecaprenyl-pyrophosphoryl-MurNAc-pentapeptide, known as lipid I.</text>
</comment>
<comment type="catalytic activity">
    <reaction evidence="1">
        <text>UDP-N-acetyl-alpha-D-muramoyl-L-alanyl-gamma-D-glutamyl-meso-2,6-diaminopimeloyl-D-alanyl-D-alanine + di-trans,octa-cis-undecaprenyl phosphate = di-trans,octa-cis-undecaprenyl diphospho-N-acetyl-alpha-D-muramoyl-L-alanyl-D-glutamyl-meso-2,6-diaminopimeloyl-D-alanyl-D-alanine + UMP</text>
        <dbReference type="Rhea" id="RHEA:28386"/>
        <dbReference type="ChEBI" id="CHEBI:57865"/>
        <dbReference type="ChEBI" id="CHEBI:60392"/>
        <dbReference type="ChEBI" id="CHEBI:61386"/>
        <dbReference type="ChEBI" id="CHEBI:61387"/>
        <dbReference type="EC" id="2.7.8.13"/>
    </reaction>
</comment>
<comment type="cofactor">
    <cofactor evidence="1">
        <name>Mg(2+)</name>
        <dbReference type="ChEBI" id="CHEBI:18420"/>
    </cofactor>
</comment>
<comment type="pathway">
    <text evidence="1">Cell wall biogenesis; peptidoglycan biosynthesis.</text>
</comment>
<comment type="subcellular location">
    <subcellularLocation>
        <location evidence="1">Cell inner membrane</location>
        <topology evidence="1">Multi-pass membrane protein</topology>
    </subcellularLocation>
</comment>
<comment type="similarity">
    <text evidence="1">Belongs to the glycosyltransferase 4 family. MraY subfamily.</text>
</comment>